<comment type="function">
    <text evidence="1">Renin is a highly specific endopeptidase, whose only known function is to generate angiotensin I from angiotensinogen in the plasma, initiating a cascade of reactions that produce an elevation of blood pressure and increased sodium retention by the kidney.</text>
</comment>
<comment type="catalytic activity">
    <reaction evidence="1">
        <text>Cleavage of Leu-|-Xaa bond in angiotensinogen to generate angiotensin I.</text>
        <dbReference type="EC" id="3.4.23.15"/>
    </reaction>
</comment>
<comment type="activity regulation">
    <text evidence="1">Interaction with ATP6AP2 results in a 5-fold increased efficiency in angiotensinogen processing.</text>
</comment>
<comment type="subunit">
    <text evidence="1">Interacts with ATP6AP2.</text>
</comment>
<comment type="subcellular location">
    <subcellularLocation>
        <location evidence="1">Secreted</location>
    </subcellularLocation>
    <subcellularLocation>
        <location evidence="1">Membrane</location>
    </subcellularLocation>
    <text evidence="1">Associated to membranes via binding to ATP6AP2.</text>
</comment>
<comment type="similarity">
    <text evidence="6">Belongs to the peptidase A1 family.</text>
</comment>
<feature type="signal peptide" evidence="1">
    <location>
        <begin position="1"/>
        <end position="22"/>
    </location>
</feature>
<feature type="propeptide" id="PRO_0000026079" description="Activation peptide" evidence="1">
    <location>
        <begin position="23"/>
        <end position="65"/>
    </location>
</feature>
<feature type="chain" id="PRO_0000026080" description="Renin">
    <location>
        <begin position="66"/>
        <end position="403"/>
    </location>
</feature>
<feature type="domain" description="Peptidase A1" evidence="3">
    <location>
        <begin position="85"/>
        <end position="400"/>
    </location>
</feature>
<feature type="active site" evidence="4">
    <location>
        <position position="103"/>
    </location>
</feature>
<feature type="active site" evidence="4">
    <location>
        <position position="288"/>
    </location>
</feature>
<feature type="glycosylation site" description="N-linked (GlcNAc...) asparagine" evidence="2">
    <location>
        <position position="70"/>
    </location>
</feature>
<feature type="glycosylation site" description="N-linked (GlcNAc...) asparagine" evidence="2">
    <location>
        <position position="140"/>
    </location>
</feature>
<feature type="disulfide bond" evidence="1">
    <location>
        <begin position="116"/>
        <end position="123"/>
    </location>
</feature>
<feature type="disulfide bond" evidence="1">
    <location>
        <begin position="279"/>
        <end position="283"/>
    </location>
</feature>
<feature type="disulfide bond" evidence="1">
    <location>
        <begin position="322"/>
        <end position="359"/>
    </location>
</feature>
<protein>
    <recommendedName>
        <fullName evidence="5">Renin</fullName>
        <ecNumber evidence="1">3.4.23.15</ecNumber>
    </recommendedName>
    <alternativeName>
        <fullName>Angiotensinogenase</fullName>
    </alternativeName>
</protein>
<proteinExistence type="evidence at transcript level"/>
<dbReference type="EC" id="3.4.23.15" evidence="1"/>
<dbReference type="EMBL" id="AY630442">
    <property type="protein sequence ID" value="AAT68959.1"/>
    <property type="molecule type" value="mRNA"/>
</dbReference>
<dbReference type="RefSeq" id="NP_001003194.1">
    <property type="nucleotide sequence ID" value="NM_001003194.2"/>
</dbReference>
<dbReference type="SMR" id="Q6DYE7"/>
<dbReference type="FunCoup" id="Q6DYE7">
    <property type="interactions" value="9"/>
</dbReference>
<dbReference type="STRING" id="9615.ENSCAFP00000061818"/>
<dbReference type="MEROPS" id="A01.008"/>
<dbReference type="GlyCosmos" id="Q6DYE7">
    <property type="glycosylation" value="2 sites, No reported glycans"/>
</dbReference>
<dbReference type="PaxDb" id="9612-ENSCAFP00000014146"/>
<dbReference type="Ensembl" id="ENSCAFT00000015286.5">
    <property type="protein sequence ID" value="ENSCAFP00000014146.3"/>
    <property type="gene ID" value="ENSCAFG00000009623.5"/>
</dbReference>
<dbReference type="Ensembl" id="ENSCAFT00030022244.1">
    <property type="protein sequence ID" value="ENSCAFP00030019403.1"/>
    <property type="gene ID" value="ENSCAFG00030011832.1"/>
</dbReference>
<dbReference type="Ensembl" id="ENSCAFT00040025395.1">
    <property type="protein sequence ID" value="ENSCAFP00040022078.1"/>
    <property type="gene ID" value="ENSCAFG00040013534.1"/>
</dbReference>
<dbReference type="GeneID" id="403838"/>
<dbReference type="KEGG" id="cfa:403838"/>
<dbReference type="CTD" id="5972"/>
<dbReference type="VGNC" id="VGNC:45474">
    <property type="gene designation" value="REN"/>
</dbReference>
<dbReference type="eggNOG" id="KOG1339">
    <property type="taxonomic scope" value="Eukaryota"/>
</dbReference>
<dbReference type="HOGENOM" id="CLU_013253_3_3_1"/>
<dbReference type="InParanoid" id="Q6DYE7"/>
<dbReference type="OMA" id="DMQYYGE"/>
<dbReference type="OrthoDB" id="771136at2759"/>
<dbReference type="TreeFam" id="TF314990"/>
<dbReference type="BRENDA" id="3.4.23.15">
    <property type="organism ID" value="1153"/>
</dbReference>
<dbReference type="Reactome" id="R-CFA-2022377">
    <property type="pathway name" value="Metabolism of Angiotensinogen to Angiotensins"/>
</dbReference>
<dbReference type="Proteomes" id="UP000002254">
    <property type="component" value="Chromosome 38"/>
</dbReference>
<dbReference type="Proteomes" id="UP000694429">
    <property type="component" value="Chromosome 38"/>
</dbReference>
<dbReference type="Proteomes" id="UP000694542">
    <property type="component" value="Chromosome 38"/>
</dbReference>
<dbReference type="Proteomes" id="UP000805418">
    <property type="component" value="Unplaced"/>
</dbReference>
<dbReference type="Bgee" id="ENSCAFG00000009623">
    <property type="expression patterns" value="Expressed in metanephros cortex and 10 other cell types or tissues"/>
</dbReference>
<dbReference type="GO" id="GO:0005615">
    <property type="term" value="C:extracellular space"/>
    <property type="evidence" value="ECO:0000318"/>
    <property type="project" value="GO_Central"/>
</dbReference>
<dbReference type="GO" id="GO:0016020">
    <property type="term" value="C:membrane"/>
    <property type="evidence" value="ECO:0007669"/>
    <property type="project" value="UniProtKB-SubCell"/>
</dbReference>
<dbReference type="GO" id="GO:0004190">
    <property type="term" value="F:aspartic-type endopeptidase activity"/>
    <property type="evidence" value="ECO:0000318"/>
    <property type="project" value="GO_Central"/>
</dbReference>
<dbReference type="GO" id="GO:0002003">
    <property type="term" value="P:angiotensin maturation"/>
    <property type="evidence" value="ECO:0000318"/>
    <property type="project" value="GO_Central"/>
</dbReference>
<dbReference type="CDD" id="cd05487">
    <property type="entry name" value="renin_like"/>
    <property type="match status" value="1"/>
</dbReference>
<dbReference type="FunFam" id="2.40.70.10:FF:000037">
    <property type="entry name" value="Renin"/>
    <property type="match status" value="1"/>
</dbReference>
<dbReference type="FunFam" id="2.40.70.10:FF:000032">
    <property type="entry name" value="renin"/>
    <property type="match status" value="1"/>
</dbReference>
<dbReference type="Gene3D" id="2.40.70.10">
    <property type="entry name" value="Acid Proteases"/>
    <property type="match status" value="2"/>
</dbReference>
<dbReference type="InterPro" id="IPR001461">
    <property type="entry name" value="Aspartic_peptidase_A1"/>
</dbReference>
<dbReference type="InterPro" id="IPR001969">
    <property type="entry name" value="Aspartic_peptidase_AS"/>
</dbReference>
<dbReference type="InterPro" id="IPR012848">
    <property type="entry name" value="Aspartic_peptidase_N"/>
</dbReference>
<dbReference type="InterPro" id="IPR033121">
    <property type="entry name" value="PEPTIDASE_A1"/>
</dbReference>
<dbReference type="InterPro" id="IPR021109">
    <property type="entry name" value="Peptidase_aspartic_dom_sf"/>
</dbReference>
<dbReference type="InterPro" id="IPR034135">
    <property type="entry name" value="Renin-like_dom"/>
</dbReference>
<dbReference type="PANTHER" id="PTHR47966">
    <property type="entry name" value="BETA-SITE APP-CLEAVING ENZYME, ISOFORM A-RELATED"/>
    <property type="match status" value="1"/>
</dbReference>
<dbReference type="PANTHER" id="PTHR47966:SF24">
    <property type="entry name" value="RENIN"/>
    <property type="match status" value="1"/>
</dbReference>
<dbReference type="Pfam" id="PF07966">
    <property type="entry name" value="A1_Propeptide"/>
    <property type="match status" value="1"/>
</dbReference>
<dbReference type="Pfam" id="PF00026">
    <property type="entry name" value="Asp"/>
    <property type="match status" value="1"/>
</dbReference>
<dbReference type="PRINTS" id="PR00792">
    <property type="entry name" value="PEPSIN"/>
</dbReference>
<dbReference type="SUPFAM" id="SSF50630">
    <property type="entry name" value="Acid proteases"/>
    <property type="match status" value="1"/>
</dbReference>
<dbReference type="PROSITE" id="PS00141">
    <property type="entry name" value="ASP_PROTEASE"/>
    <property type="match status" value="2"/>
</dbReference>
<dbReference type="PROSITE" id="PS51767">
    <property type="entry name" value="PEPTIDASE_A1"/>
    <property type="match status" value="1"/>
</dbReference>
<sequence>MARCRMPRWGLLLVLWGSCTFGLPADTGAFRRIFLKKMPSIRESLKERGVDVAGLGAEWNQFTKRLSSGNSTSPVVLTNYLDTQYYGEIGIGTPPQTFKVVFDTGSANLWVPSTRCSPLYTACEIHCLYDSSESSSYMENGTTFTIRYGSGKVKGFLSQDMVTVGGITVTQTFGEVTELPLIPFMLAKFDGVLGMGFPAQAVGGVTPVFDHILSQGVLKEEVFSVYYSRNSHLLGGEVVLGGSDPQYYQGNFHYVSISKTGSWQIKMKGVSVRSATLVCEEGCMVVVDTGASYISGPTSSLRLLMDTLGAQELSTNEYVVNCNQVPTLPDISFHLGGRAYTLTSKDYVLQDPYGNEDLCTLALHGLDVPPPTGPVWVLGASFIRKFYTEFDRHNNRIGFALAR</sequence>
<name>RENI_CANLF</name>
<gene>
    <name type="primary">REN</name>
</gene>
<accession>Q6DYE7</accession>
<organism>
    <name type="scientific">Canis lupus familiaris</name>
    <name type="common">Dog</name>
    <name type="synonym">Canis familiaris</name>
    <dbReference type="NCBI Taxonomy" id="9615"/>
    <lineage>
        <taxon>Eukaryota</taxon>
        <taxon>Metazoa</taxon>
        <taxon>Chordata</taxon>
        <taxon>Craniata</taxon>
        <taxon>Vertebrata</taxon>
        <taxon>Euteleostomi</taxon>
        <taxon>Mammalia</taxon>
        <taxon>Eutheria</taxon>
        <taxon>Laurasiatheria</taxon>
        <taxon>Carnivora</taxon>
        <taxon>Caniformia</taxon>
        <taxon>Canidae</taxon>
        <taxon>Canis</taxon>
    </lineage>
</organism>
<reference key="1">
    <citation type="submission" date="2004-05" db="EMBL/GenBank/DDBJ databases">
        <title>The cloning and characterization of canine renin.</title>
        <authorList>
            <person name="Zecher M."/>
            <person name="Wu Z."/>
            <person name="Scott B."/>
            <person name="McGeehan G."/>
            <person name="Harrison R."/>
        </authorList>
    </citation>
    <scope>NUCLEOTIDE SEQUENCE [MRNA]</scope>
</reference>
<evidence type="ECO:0000250" key="1">
    <source>
        <dbReference type="UniProtKB" id="P00797"/>
    </source>
</evidence>
<evidence type="ECO:0000255" key="2"/>
<evidence type="ECO:0000255" key="3">
    <source>
        <dbReference type="PROSITE-ProRule" id="PRU01103"/>
    </source>
</evidence>
<evidence type="ECO:0000255" key="4">
    <source>
        <dbReference type="PROSITE-ProRule" id="PRU10094"/>
    </source>
</evidence>
<evidence type="ECO:0000303" key="5">
    <source ref="1"/>
</evidence>
<evidence type="ECO:0000305" key="6"/>
<keyword id="KW-0064">Aspartyl protease</keyword>
<keyword id="KW-0165">Cleavage on pair of basic residues</keyword>
<keyword id="KW-1015">Disulfide bond</keyword>
<keyword id="KW-0325">Glycoprotein</keyword>
<keyword id="KW-0378">Hydrolase</keyword>
<keyword id="KW-0472">Membrane</keyword>
<keyword id="KW-0645">Protease</keyword>
<keyword id="KW-1185">Reference proteome</keyword>
<keyword id="KW-0964">Secreted</keyword>
<keyword id="KW-0732">Signal</keyword>
<keyword id="KW-0865">Zymogen</keyword>